<reference key="1">
    <citation type="submission" date="2007-06" db="EMBL/GenBank/DDBJ databases">
        <authorList>
            <person name="Dodson R.J."/>
            <person name="Harkins D."/>
            <person name="Paulsen I.T."/>
        </authorList>
    </citation>
    <scope>NUCLEOTIDE SEQUENCE [LARGE SCALE GENOMIC DNA]</scope>
    <source>
        <strain>DSM 24068 / PA7</strain>
    </source>
</reference>
<feature type="chain" id="PRO_1000062197" description="UPF0301 protein PSPA7_0505">
    <location>
        <begin position="1"/>
        <end position="189"/>
    </location>
</feature>
<dbReference type="EMBL" id="CP000744">
    <property type="protein sequence ID" value="ABR81019.1"/>
    <property type="molecule type" value="Genomic_DNA"/>
</dbReference>
<dbReference type="RefSeq" id="WP_012073998.1">
    <property type="nucleotide sequence ID" value="NC_009656.1"/>
</dbReference>
<dbReference type="SMR" id="A6UYL5"/>
<dbReference type="KEGG" id="pap:PSPA7_0505"/>
<dbReference type="HOGENOM" id="CLU_057596_1_0_6"/>
<dbReference type="Proteomes" id="UP000001582">
    <property type="component" value="Chromosome"/>
</dbReference>
<dbReference type="GO" id="GO:0005829">
    <property type="term" value="C:cytosol"/>
    <property type="evidence" value="ECO:0007669"/>
    <property type="project" value="TreeGrafter"/>
</dbReference>
<dbReference type="Gene3D" id="3.40.1740.10">
    <property type="entry name" value="VC0467-like"/>
    <property type="match status" value="1"/>
</dbReference>
<dbReference type="HAMAP" id="MF_00758">
    <property type="entry name" value="UPF0301"/>
    <property type="match status" value="1"/>
</dbReference>
<dbReference type="InterPro" id="IPR003774">
    <property type="entry name" value="AlgH-like"/>
</dbReference>
<dbReference type="NCBIfam" id="NF001266">
    <property type="entry name" value="PRK00228.1-1"/>
    <property type="match status" value="1"/>
</dbReference>
<dbReference type="PANTHER" id="PTHR30327">
    <property type="entry name" value="UNCHARACTERIZED PROTEIN YQGE"/>
    <property type="match status" value="1"/>
</dbReference>
<dbReference type="PANTHER" id="PTHR30327:SF1">
    <property type="entry name" value="UPF0301 PROTEIN YQGE"/>
    <property type="match status" value="1"/>
</dbReference>
<dbReference type="Pfam" id="PF02622">
    <property type="entry name" value="DUF179"/>
    <property type="match status" value="1"/>
</dbReference>
<dbReference type="SUPFAM" id="SSF143456">
    <property type="entry name" value="VC0467-like"/>
    <property type="match status" value="1"/>
</dbReference>
<organism>
    <name type="scientific">Pseudomonas paraeruginosa (strain DSM 24068 / PA7)</name>
    <name type="common">Pseudomonas aeruginosa (strain PA7)</name>
    <dbReference type="NCBI Taxonomy" id="381754"/>
    <lineage>
        <taxon>Bacteria</taxon>
        <taxon>Pseudomonadati</taxon>
        <taxon>Pseudomonadota</taxon>
        <taxon>Gammaproteobacteria</taxon>
        <taxon>Pseudomonadales</taxon>
        <taxon>Pseudomonadaceae</taxon>
        <taxon>Pseudomonas</taxon>
        <taxon>Pseudomonas paraeruginosa</taxon>
    </lineage>
</organism>
<comment type="similarity">
    <text evidence="1">Belongs to the UPF0301 (AlgH) family.</text>
</comment>
<accession>A6UYL5</accession>
<name>Y505_PSEP7</name>
<evidence type="ECO:0000255" key="1">
    <source>
        <dbReference type="HAMAP-Rule" id="MF_00758"/>
    </source>
</evidence>
<gene>
    <name type="ordered locus">PSPA7_0505</name>
</gene>
<sequence>MKQSSPTYLKHHFLIAMPHMADPNFAQTVTYLVEHNDQGAMGLVINRPSGLNLAEVLEQLKPDVLPPARCQHIEIYNGGPVQTDRGFVLHPSGLAYQSTLELGELAMSTSQDVLFAIAAGTGPEKSLISLGYAGWEAGQLEAELSDNAWLTCPADPAILFDLPAEERLSAAAACLGVNLSLLTAQAGHA</sequence>
<proteinExistence type="inferred from homology"/>
<protein>
    <recommendedName>
        <fullName evidence="1">UPF0301 protein PSPA7_0505</fullName>
    </recommendedName>
</protein>